<proteinExistence type="evidence at protein level"/>
<reference key="1">
    <citation type="journal article" date="2019" name="Microbiol. Resour. Announc.">
        <title>Complete Genome Sequence of Citrobacter rodentium Strain DBS100.</title>
        <authorList>
            <person name="Popov G."/>
            <person name="Fiebig-Comyn A."/>
            <person name="Shideler S."/>
            <person name="Coombes B.K."/>
            <person name="Savchenko A."/>
        </authorList>
    </citation>
    <scope>NUCLEOTIDE SEQUENCE [LARGE SCALE GENOMIC DNA]</scope>
    <source>
        <strain>DBS100</strain>
    </source>
</reference>
<reference key="2">
    <citation type="journal article" date="2020" name="Sci. Rep.">
        <title>An intra-bacterial activity for a T3SS effector.</title>
        <authorList>
            <person name="El Qaidi S."/>
            <person name="Scott N.E."/>
            <person name="Hays M.P."/>
            <person name="Geisbrecht B.V."/>
            <person name="Watkins S."/>
            <person name="Hardwidge P.R."/>
        </authorList>
    </citation>
    <scope>CATALYTIC ACTIVITY</scope>
    <scope>GLYCOSYLATION AT ARG-256</scope>
    <scope>MUTAGENESIS OF ARG-256</scope>
    <source>
        <strain>DBS100</strain>
    </source>
</reference>
<accession>A0A482PU20</accession>
<sequence length="315" mass="35289">MIKLGIVMDPIASINIKKDSSFAMLLEAQRRGYELHYMEMADLYLINGEARARTRTLSVEQNYDKWYDFTGEQDLALDSLDAILMRKDPPFDTEFIYATYILERAEEKGTLIVNKPQSLRDCNEKLFTAWFSDLTPETLVTRNKAQLKAFWQKHSDIILKPLDGMGGASIFRVKEGDPNLGVIAETLTEHGTRYCMAQNYLPAIVDGDKRVLVVDGEPVPYCLARIPQGGETRGNLAAGGRGEPRPLTDSDWAIARRIGPTLKAKGLIFVGLDIIGDRLTEINVTSPTCIREIEAEFPISITGMLMDAIEARLQK</sequence>
<feature type="chain" id="PRO_0000452588" description="Glutathione synthetase">
    <location>
        <begin position="1"/>
        <end position="315"/>
    </location>
</feature>
<feature type="domain" description="ATP-grasp" evidence="1">
    <location>
        <begin position="125"/>
        <end position="310"/>
    </location>
</feature>
<feature type="binding site" evidence="1">
    <location>
        <position position="281"/>
    </location>
    <ligand>
        <name>Mg(2+)</name>
        <dbReference type="ChEBI" id="CHEBI:18420"/>
    </ligand>
</feature>
<feature type="binding site" evidence="1">
    <location>
        <position position="283"/>
    </location>
    <ligand>
        <name>Mg(2+)</name>
        <dbReference type="ChEBI" id="CHEBI:18420"/>
    </ligand>
</feature>
<feature type="glycosylation site" description="N-beta-linked (GlcNAc) arginine" evidence="2">
    <location>
        <position position="256"/>
    </location>
</feature>
<feature type="mutagenesis site" description="Abolished glycosylation by NleB." evidence="2">
    <original>R</original>
    <variation>A</variation>
    <location>
        <position position="256"/>
    </location>
</feature>
<organism>
    <name type="scientific">Citrobacter rodentium</name>
    <dbReference type="NCBI Taxonomy" id="67825"/>
    <lineage>
        <taxon>Bacteria</taxon>
        <taxon>Pseudomonadati</taxon>
        <taxon>Pseudomonadota</taxon>
        <taxon>Gammaproteobacteria</taxon>
        <taxon>Enterobacterales</taxon>
        <taxon>Enterobacteriaceae</taxon>
        <taxon>Citrobacter</taxon>
    </lineage>
</organism>
<evidence type="ECO:0000255" key="1">
    <source>
        <dbReference type="HAMAP-Rule" id="MF_00162"/>
    </source>
</evidence>
<evidence type="ECO:0000269" key="2">
    <source>
    </source>
</evidence>
<evidence type="ECO:0000303" key="3">
    <source>
    </source>
</evidence>
<evidence type="ECO:0000305" key="4">
    <source>
    </source>
</evidence>
<evidence type="ECO:0000312" key="5">
    <source>
        <dbReference type="EMBL" id="QBY31206.1"/>
    </source>
</evidence>
<gene>
    <name evidence="1 3" type="primary">gshB</name>
    <name evidence="5" type="ORF">E2R62_21965</name>
</gene>
<protein>
    <recommendedName>
        <fullName evidence="1">Glutathione synthetase</fullName>
        <ecNumber evidence="1 4">6.3.2.3</ecNumber>
    </recommendedName>
    <alternativeName>
        <fullName evidence="1">GSH synthetase</fullName>
        <shortName evidence="1">GSH-S</shortName>
        <shortName evidence="1">GSHase</shortName>
    </alternativeName>
    <alternativeName>
        <fullName evidence="1">Glutathione synthase</fullName>
    </alternativeName>
</protein>
<keyword id="KW-0067">ATP-binding</keyword>
<keyword id="KW-0317">Glutathione biosynthesis</keyword>
<keyword id="KW-0325">Glycoprotein</keyword>
<keyword id="KW-0436">Ligase</keyword>
<keyword id="KW-0460">Magnesium</keyword>
<keyword id="KW-0464">Manganese</keyword>
<keyword id="KW-0479">Metal-binding</keyword>
<keyword id="KW-0547">Nucleotide-binding</keyword>
<name>GSHB_CITRO</name>
<dbReference type="EC" id="6.3.2.3" evidence="1 4"/>
<dbReference type="EMBL" id="CP038008">
    <property type="protein sequence ID" value="QBY31206.1"/>
    <property type="molecule type" value="Genomic_DNA"/>
</dbReference>
<dbReference type="RefSeq" id="WP_012908854.1">
    <property type="nucleotide sequence ID" value="NZ_JXUN01000147.1"/>
</dbReference>
<dbReference type="SMR" id="A0A482PU20"/>
<dbReference type="GlyCosmos" id="A0A482PU20">
    <property type="glycosylation" value="1 site, No reported glycans"/>
</dbReference>
<dbReference type="OMA" id="IWMRKDP"/>
<dbReference type="UniPathway" id="UPA00142">
    <property type="reaction ID" value="UER00210"/>
</dbReference>
<dbReference type="GO" id="GO:0005737">
    <property type="term" value="C:cytoplasm"/>
    <property type="evidence" value="ECO:0007669"/>
    <property type="project" value="TreeGrafter"/>
</dbReference>
<dbReference type="GO" id="GO:0005524">
    <property type="term" value="F:ATP binding"/>
    <property type="evidence" value="ECO:0007669"/>
    <property type="project" value="UniProtKB-UniRule"/>
</dbReference>
<dbReference type="GO" id="GO:0004363">
    <property type="term" value="F:glutathione synthase activity"/>
    <property type="evidence" value="ECO:0007669"/>
    <property type="project" value="UniProtKB-UniRule"/>
</dbReference>
<dbReference type="GO" id="GO:0046872">
    <property type="term" value="F:metal ion binding"/>
    <property type="evidence" value="ECO:0007669"/>
    <property type="project" value="UniProtKB-KW"/>
</dbReference>
<dbReference type="FunFam" id="3.30.1490.20:FF:000009">
    <property type="entry name" value="Glutathione synthetase"/>
    <property type="match status" value="1"/>
</dbReference>
<dbReference type="FunFam" id="3.30.470.20:FF:000010">
    <property type="entry name" value="Glutathione synthetase"/>
    <property type="match status" value="1"/>
</dbReference>
<dbReference type="FunFam" id="3.40.50.20:FF:000009">
    <property type="entry name" value="Glutathione synthetase"/>
    <property type="match status" value="1"/>
</dbReference>
<dbReference type="Gene3D" id="3.40.50.20">
    <property type="match status" value="1"/>
</dbReference>
<dbReference type="Gene3D" id="3.30.1490.20">
    <property type="entry name" value="ATP-grasp fold, A domain"/>
    <property type="match status" value="1"/>
</dbReference>
<dbReference type="Gene3D" id="3.30.470.20">
    <property type="entry name" value="ATP-grasp fold, B domain"/>
    <property type="match status" value="1"/>
</dbReference>
<dbReference type="HAMAP" id="MF_00162">
    <property type="entry name" value="GSH_S"/>
    <property type="match status" value="1"/>
</dbReference>
<dbReference type="InterPro" id="IPR011761">
    <property type="entry name" value="ATP-grasp"/>
</dbReference>
<dbReference type="InterPro" id="IPR013815">
    <property type="entry name" value="ATP_grasp_subdomain_1"/>
</dbReference>
<dbReference type="InterPro" id="IPR006284">
    <property type="entry name" value="Glut_synth_pro"/>
</dbReference>
<dbReference type="InterPro" id="IPR004218">
    <property type="entry name" value="GSHS_ATP-bd"/>
</dbReference>
<dbReference type="InterPro" id="IPR004215">
    <property type="entry name" value="GSHS_N"/>
</dbReference>
<dbReference type="InterPro" id="IPR016185">
    <property type="entry name" value="PreATP-grasp_dom_sf"/>
</dbReference>
<dbReference type="NCBIfam" id="TIGR01380">
    <property type="entry name" value="glut_syn"/>
    <property type="match status" value="1"/>
</dbReference>
<dbReference type="NCBIfam" id="NF003573">
    <property type="entry name" value="PRK05246.1"/>
    <property type="match status" value="1"/>
</dbReference>
<dbReference type="PANTHER" id="PTHR21621:SF4">
    <property type="entry name" value="GLUTATHIONE SYNTHETASE"/>
    <property type="match status" value="1"/>
</dbReference>
<dbReference type="PANTHER" id="PTHR21621">
    <property type="entry name" value="RIBOSOMAL PROTEIN S6 MODIFICATION PROTEIN"/>
    <property type="match status" value="1"/>
</dbReference>
<dbReference type="Pfam" id="PF02955">
    <property type="entry name" value="GSH-S_ATP"/>
    <property type="match status" value="1"/>
</dbReference>
<dbReference type="Pfam" id="PF02951">
    <property type="entry name" value="GSH-S_N"/>
    <property type="match status" value="1"/>
</dbReference>
<dbReference type="SUPFAM" id="SSF56059">
    <property type="entry name" value="Glutathione synthetase ATP-binding domain-like"/>
    <property type="match status" value="1"/>
</dbReference>
<dbReference type="SUPFAM" id="SSF52440">
    <property type="entry name" value="PreATP-grasp domain"/>
    <property type="match status" value="1"/>
</dbReference>
<dbReference type="PROSITE" id="PS50975">
    <property type="entry name" value="ATP_GRASP"/>
    <property type="match status" value="1"/>
</dbReference>
<comment type="catalytic activity">
    <reaction evidence="1 4">
        <text>gamma-L-glutamyl-L-cysteine + glycine + ATP = glutathione + ADP + phosphate + H(+)</text>
        <dbReference type="Rhea" id="RHEA:13557"/>
        <dbReference type="ChEBI" id="CHEBI:15378"/>
        <dbReference type="ChEBI" id="CHEBI:30616"/>
        <dbReference type="ChEBI" id="CHEBI:43474"/>
        <dbReference type="ChEBI" id="CHEBI:57305"/>
        <dbReference type="ChEBI" id="CHEBI:57925"/>
        <dbReference type="ChEBI" id="CHEBI:58173"/>
        <dbReference type="ChEBI" id="CHEBI:456216"/>
        <dbReference type="EC" id="6.3.2.3"/>
    </reaction>
</comment>
<comment type="cofactor">
    <cofactor evidence="1">
        <name>Mg(2+)</name>
        <dbReference type="ChEBI" id="CHEBI:18420"/>
    </cofactor>
    <cofactor evidence="1">
        <name>Mn(2+)</name>
        <dbReference type="ChEBI" id="CHEBI:29035"/>
    </cofactor>
    <text evidence="1">Binds 1 magnesium or manganese ion per subunit.</text>
</comment>
<comment type="pathway">
    <text evidence="1">Sulfur metabolism; glutathione biosynthesis; glutathione from L-cysteine and L-glutamate: step 2/2.</text>
</comment>
<comment type="PTM">
    <text evidence="2">Glycosylation at Arg-256 by NleB enhances the glutathione synthetase activity, leading to an increase in glutathione production (PubMed:31974499). Glycosylation may promote C.rodentium survival in oxidative stress conditions (PubMed:31974499).</text>
</comment>
<comment type="similarity">
    <text evidence="1">Belongs to the prokaryotic GSH synthase family.</text>
</comment>